<sequence>MKIYYEKDADISLIQKLKVAVVGYGSQGHAHALNLKDSGVKQIKVALQEGSASRKKAEAAGLEVVSVADAAKWADVLMILVPDEKQAVLYANEIEPHLRAGQHLMFGHGFNIHYNLIRPRADVDVSLSAPKGPGHTLRNQYQMGFGLPGLIAIHQDATGSAQAVALSYSKAIGNTRAGVIETSFREETETDLFGEQAVLCGGIVELIKAGYETLVEAGYAPEMAYFECLHETKLIVDLIYEGGIANMNYSISNTAEYGEYVTGPRLVNAETKKEMKKVLEDIQNGTFARNWVLENQAGAPGFHAMRQRMSSHPIEEVGEKLRGMMHWAQNDRLVDKSRN</sequence>
<organism>
    <name type="scientific">Hyphomonas neptunium (strain ATCC 15444)</name>
    <dbReference type="NCBI Taxonomy" id="228405"/>
    <lineage>
        <taxon>Bacteria</taxon>
        <taxon>Pseudomonadati</taxon>
        <taxon>Pseudomonadota</taxon>
        <taxon>Alphaproteobacteria</taxon>
        <taxon>Hyphomonadales</taxon>
        <taxon>Hyphomonadaceae</taxon>
        <taxon>Hyphomonas</taxon>
    </lineage>
</organism>
<protein>
    <recommendedName>
        <fullName evidence="1">Ketol-acid reductoisomerase (NADP(+))</fullName>
        <shortName evidence="1">KARI</shortName>
        <ecNumber evidence="1">1.1.1.86</ecNumber>
    </recommendedName>
    <alternativeName>
        <fullName evidence="1">Acetohydroxy-acid isomeroreductase</fullName>
        <shortName evidence="1">AHIR</shortName>
    </alternativeName>
    <alternativeName>
        <fullName evidence="1">Alpha-keto-beta-hydroxylacyl reductoisomerase</fullName>
    </alternativeName>
    <alternativeName>
        <fullName evidence="1">Ketol-acid reductoisomerase type 1</fullName>
    </alternativeName>
    <alternativeName>
        <fullName evidence="1">Ketol-acid reductoisomerase type I</fullName>
    </alternativeName>
</protein>
<reference key="1">
    <citation type="journal article" date="2006" name="J. Bacteriol.">
        <title>Comparative genomic evidence for a close relationship between the dimorphic prosthecate bacteria Hyphomonas neptunium and Caulobacter crescentus.</title>
        <authorList>
            <person name="Badger J.H."/>
            <person name="Hoover T.R."/>
            <person name="Brun Y.V."/>
            <person name="Weiner R.M."/>
            <person name="Laub M.T."/>
            <person name="Alexandre G."/>
            <person name="Mrazek J."/>
            <person name="Ren Q."/>
            <person name="Paulsen I.T."/>
            <person name="Nelson K.E."/>
            <person name="Khouri H.M."/>
            <person name="Radune D."/>
            <person name="Sosa J."/>
            <person name="Dodson R.J."/>
            <person name="Sullivan S.A."/>
            <person name="Rosovitz M.J."/>
            <person name="Madupu R."/>
            <person name="Brinkac L.M."/>
            <person name="Durkin A.S."/>
            <person name="Daugherty S.C."/>
            <person name="Kothari S.P."/>
            <person name="Giglio M.G."/>
            <person name="Zhou L."/>
            <person name="Haft D.H."/>
            <person name="Selengut J.D."/>
            <person name="Davidsen T.M."/>
            <person name="Yang Q."/>
            <person name="Zafar N."/>
            <person name="Ward N.L."/>
        </authorList>
    </citation>
    <scope>NUCLEOTIDE SEQUENCE [LARGE SCALE GENOMIC DNA]</scope>
    <source>
        <strain>ATCC 15444</strain>
    </source>
</reference>
<gene>
    <name evidence="1" type="primary">ilvC</name>
    <name type="ordered locus">HNE_0447</name>
</gene>
<feature type="chain" id="PRO_1000050518" description="Ketol-acid reductoisomerase (NADP(+))">
    <location>
        <begin position="1"/>
        <end position="339"/>
    </location>
</feature>
<feature type="domain" description="KARI N-terminal Rossmann" evidence="2">
    <location>
        <begin position="1"/>
        <end position="182"/>
    </location>
</feature>
<feature type="domain" description="KARI C-terminal knotted" evidence="3">
    <location>
        <begin position="183"/>
        <end position="328"/>
    </location>
</feature>
<feature type="active site" evidence="1">
    <location>
        <position position="108"/>
    </location>
</feature>
<feature type="binding site" evidence="1">
    <location>
        <begin position="24"/>
        <end position="27"/>
    </location>
    <ligand>
        <name>NADP(+)</name>
        <dbReference type="ChEBI" id="CHEBI:58349"/>
    </ligand>
</feature>
<feature type="binding site" evidence="1">
    <location>
        <position position="51"/>
    </location>
    <ligand>
        <name>NADP(+)</name>
        <dbReference type="ChEBI" id="CHEBI:58349"/>
    </ligand>
</feature>
<feature type="binding site" evidence="1">
    <location>
        <position position="53"/>
    </location>
    <ligand>
        <name>NADP(+)</name>
        <dbReference type="ChEBI" id="CHEBI:58349"/>
    </ligand>
</feature>
<feature type="binding site" evidence="1">
    <location>
        <begin position="83"/>
        <end position="86"/>
    </location>
    <ligand>
        <name>NADP(+)</name>
        <dbReference type="ChEBI" id="CHEBI:58349"/>
    </ligand>
</feature>
<feature type="binding site" evidence="1">
    <location>
        <position position="134"/>
    </location>
    <ligand>
        <name>NADP(+)</name>
        <dbReference type="ChEBI" id="CHEBI:58349"/>
    </ligand>
</feature>
<feature type="binding site" evidence="1">
    <location>
        <position position="191"/>
    </location>
    <ligand>
        <name>Mg(2+)</name>
        <dbReference type="ChEBI" id="CHEBI:18420"/>
        <label>1</label>
    </ligand>
</feature>
<feature type="binding site" evidence="1">
    <location>
        <position position="191"/>
    </location>
    <ligand>
        <name>Mg(2+)</name>
        <dbReference type="ChEBI" id="CHEBI:18420"/>
        <label>2</label>
    </ligand>
</feature>
<feature type="binding site" evidence="1">
    <location>
        <position position="195"/>
    </location>
    <ligand>
        <name>Mg(2+)</name>
        <dbReference type="ChEBI" id="CHEBI:18420"/>
        <label>1</label>
    </ligand>
</feature>
<feature type="binding site" evidence="1">
    <location>
        <position position="227"/>
    </location>
    <ligand>
        <name>Mg(2+)</name>
        <dbReference type="ChEBI" id="CHEBI:18420"/>
        <label>2</label>
    </ligand>
</feature>
<feature type="binding site" evidence="1">
    <location>
        <position position="231"/>
    </location>
    <ligand>
        <name>Mg(2+)</name>
        <dbReference type="ChEBI" id="CHEBI:18420"/>
        <label>2</label>
    </ligand>
</feature>
<feature type="binding site" evidence="1">
    <location>
        <position position="252"/>
    </location>
    <ligand>
        <name>substrate</name>
    </ligand>
</feature>
<evidence type="ECO:0000255" key="1">
    <source>
        <dbReference type="HAMAP-Rule" id="MF_00435"/>
    </source>
</evidence>
<evidence type="ECO:0000255" key="2">
    <source>
        <dbReference type="PROSITE-ProRule" id="PRU01197"/>
    </source>
</evidence>
<evidence type="ECO:0000255" key="3">
    <source>
        <dbReference type="PROSITE-ProRule" id="PRU01198"/>
    </source>
</evidence>
<keyword id="KW-0028">Amino-acid biosynthesis</keyword>
<keyword id="KW-0100">Branched-chain amino acid biosynthesis</keyword>
<keyword id="KW-0460">Magnesium</keyword>
<keyword id="KW-0479">Metal-binding</keyword>
<keyword id="KW-0521">NADP</keyword>
<keyword id="KW-0560">Oxidoreductase</keyword>
<keyword id="KW-1185">Reference proteome</keyword>
<dbReference type="EC" id="1.1.1.86" evidence="1"/>
<dbReference type="EMBL" id="CP000158">
    <property type="protein sequence ID" value="ABI78839.1"/>
    <property type="molecule type" value="Genomic_DNA"/>
</dbReference>
<dbReference type="RefSeq" id="WP_011645477.1">
    <property type="nucleotide sequence ID" value="NC_008358.1"/>
</dbReference>
<dbReference type="SMR" id="Q0C516"/>
<dbReference type="STRING" id="228405.HNE_0447"/>
<dbReference type="KEGG" id="hne:HNE_0447"/>
<dbReference type="eggNOG" id="COG0059">
    <property type="taxonomic scope" value="Bacteria"/>
</dbReference>
<dbReference type="HOGENOM" id="CLU_033821_0_1_5"/>
<dbReference type="UniPathway" id="UPA00047">
    <property type="reaction ID" value="UER00056"/>
</dbReference>
<dbReference type="UniPathway" id="UPA00049">
    <property type="reaction ID" value="UER00060"/>
</dbReference>
<dbReference type="Proteomes" id="UP000001959">
    <property type="component" value="Chromosome"/>
</dbReference>
<dbReference type="GO" id="GO:0005829">
    <property type="term" value="C:cytosol"/>
    <property type="evidence" value="ECO:0007669"/>
    <property type="project" value="TreeGrafter"/>
</dbReference>
<dbReference type="GO" id="GO:0004455">
    <property type="term" value="F:ketol-acid reductoisomerase activity"/>
    <property type="evidence" value="ECO:0007669"/>
    <property type="project" value="UniProtKB-UniRule"/>
</dbReference>
<dbReference type="GO" id="GO:0000287">
    <property type="term" value="F:magnesium ion binding"/>
    <property type="evidence" value="ECO:0007669"/>
    <property type="project" value="UniProtKB-UniRule"/>
</dbReference>
<dbReference type="GO" id="GO:0050661">
    <property type="term" value="F:NADP binding"/>
    <property type="evidence" value="ECO:0007669"/>
    <property type="project" value="InterPro"/>
</dbReference>
<dbReference type="GO" id="GO:0009097">
    <property type="term" value="P:isoleucine biosynthetic process"/>
    <property type="evidence" value="ECO:0007669"/>
    <property type="project" value="UniProtKB-UniRule"/>
</dbReference>
<dbReference type="GO" id="GO:0009099">
    <property type="term" value="P:L-valine biosynthetic process"/>
    <property type="evidence" value="ECO:0007669"/>
    <property type="project" value="UniProtKB-UniRule"/>
</dbReference>
<dbReference type="FunFam" id="3.40.50.720:FF:000023">
    <property type="entry name" value="Ketol-acid reductoisomerase (NADP(+))"/>
    <property type="match status" value="1"/>
</dbReference>
<dbReference type="Gene3D" id="6.10.240.10">
    <property type="match status" value="1"/>
</dbReference>
<dbReference type="Gene3D" id="3.40.50.720">
    <property type="entry name" value="NAD(P)-binding Rossmann-like Domain"/>
    <property type="match status" value="1"/>
</dbReference>
<dbReference type="HAMAP" id="MF_00435">
    <property type="entry name" value="IlvC"/>
    <property type="match status" value="1"/>
</dbReference>
<dbReference type="InterPro" id="IPR008927">
    <property type="entry name" value="6-PGluconate_DH-like_C_sf"/>
</dbReference>
<dbReference type="InterPro" id="IPR013023">
    <property type="entry name" value="KARI"/>
</dbReference>
<dbReference type="InterPro" id="IPR000506">
    <property type="entry name" value="KARI_C"/>
</dbReference>
<dbReference type="InterPro" id="IPR013116">
    <property type="entry name" value="KARI_N"/>
</dbReference>
<dbReference type="InterPro" id="IPR014359">
    <property type="entry name" value="KARI_prok"/>
</dbReference>
<dbReference type="InterPro" id="IPR036291">
    <property type="entry name" value="NAD(P)-bd_dom_sf"/>
</dbReference>
<dbReference type="NCBIfam" id="TIGR00465">
    <property type="entry name" value="ilvC"/>
    <property type="match status" value="1"/>
</dbReference>
<dbReference type="NCBIfam" id="NF004017">
    <property type="entry name" value="PRK05479.1"/>
    <property type="match status" value="1"/>
</dbReference>
<dbReference type="NCBIfam" id="NF009940">
    <property type="entry name" value="PRK13403.1"/>
    <property type="match status" value="1"/>
</dbReference>
<dbReference type="PANTHER" id="PTHR21371">
    <property type="entry name" value="KETOL-ACID REDUCTOISOMERASE, MITOCHONDRIAL"/>
    <property type="match status" value="1"/>
</dbReference>
<dbReference type="PANTHER" id="PTHR21371:SF1">
    <property type="entry name" value="KETOL-ACID REDUCTOISOMERASE, MITOCHONDRIAL"/>
    <property type="match status" value="1"/>
</dbReference>
<dbReference type="Pfam" id="PF01450">
    <property type="entry name" value="KARI_C"/>
    <property type="match status" value="1"/>
</dbReference>
<dbReference type="Pfam" id="PF07991">
    <property type="entry name" value="KARI_N"/>
    <property type="match status" value="1"/>
</dbReference>
<dbReference type="PIRSF" id="PIRSF000116">
    <property type="entry name" value="IlvC_gammaproteo"/>
    <property type="match status" value="1"/>
</dbReference>
<dbReference type="SUPFAM" id="SSF48179">
    <property type="entry name" value="6-phosphogluconate dehydrogenase C-terminal domain-like"/>
    <property type="match status" value="1"/>
</dbReference>
<dbReference type="SUPFAM" id="SSF51735">
    <property type="entry name" value="NAD(P)-binding Rossmann-fold domains"/>
    <property type="match status" value="1"/>
</dbReference>
<dbReference type="PROSITE" id="PS51851">
    <property type="entry name" value="KARI_C"/>
    <property type="match status" value="1"/>
</dbReference>
<dbReference type="PROSITE" id="PS51850">
    <property type="entry name" value="KARI_N"/>
    <property type="match status" value="1"/>
</dbReference>
<name>ILVC_HYPNA</name>
<comment type="function">
    <text evidence="1">Involved in the biosynthesis of branched-chain amino acids (BCAA). Catalyzes an alkyl-migration followed by a ketol-acid reduction of (S)-2-acetolactate (S2AL) to yield (R)-2,3-dihydroxy-isovalerate. In the isomerase reaction, S2AL is rearranged via a Mg-dependent methyl migration to produce 3-hydroxy-3-methyl-2-ketobutyrate (HMKB). In the reductase reaction, this 2-ketoacid undergoes a metal-dependent reduction by NADPH to yield (R)-2,3-dihydroxy-isovalerate.</text>
</comment>
<comment type="catalytic activity">
    <reaction evidence="1">
        <text>(2R)-2,3-dihydroxy-3-methylbutanoate + NADP(+) = (2S)-2-acetolactate + NADPH + H(+)</text>
        <dbReference type="Rhea" id="RHEA:22068"/>
        <dbReference type="ChEBI" id="CHEBI:15378"/>
        <dbReference type="ChEBI" id="CHEBI:49072"/>
        <dbReference type="ChEBI" id="CHEBI:57783"/>
        <dbReference type="ChEBI" id="CHEBI:58349"/>
        <dbReference type="ChEBI" id="CHEBI:58476"/>
        <dbReference type="EC" id="1.1.1.86"/>
    </reaction>
</comment>
<comment type="catalytic activity">
    <reaction evidence="1">
        <text>(2R,3R)-2,3-dihydroxy-3-methylpentanoate + NADP(+) = (S)-2-ethyl-2-hydroxy-3-oxobutanoate + NADPH + H(+)</text>
        <dbReference type="Rhea" id="RHEA:13493"/>
        <dbReference type="ChEBI" id="CHEBI:15378"/>
        <dbReference type="ChEBI" id="CHEBI:49256"/>
        <dbReference type="ChEBI" id="CHEBI:49258"/>
        <dbReference type="ChEBI" id="CHEBI:57783"/>
        <dbReference type="ChEBI" id="CHEBI:58349"/>
        <dbReference type="EC" id="1.1.1.86"/>
    </reaction>
</comment>
<comment type="cofactor">
    <cofactor evidence="1">
        <name>Mg(2+)</name>
        <dbReference type="ChEBI" id="CHEBI:18420"/>
    </cofactor>
    <text evidence="1">Binds 2 magnesium ions per subunit.</text>
</comment>
<comment type="pathway">
    <text evidence="1">Amino-acid biosynthesis; L-isoleucine biosynthesis; L-isoleucine from 2-oxobutanoate: step 2/4.</text>
</comment>
<comment type="pathway">
    <text evidence="1">Amino-acid biosynthesis; L-valine biosynthesis; L-valine from pyruvate: step 2/4.</text>
</comment>
<comment type="similarity">
    <text evidence="1">Belongs to the ketol-acid reductoisomerase family.</text>
</comment>
<accession>Q0C516</accession>
<proteinExistence type="inferred from homology"/>